<gene>
    <name type="primary">crl</name>
    <name type="ordered locus">STM0319</name>
</gene>
<organism>
    <name type="scientific">Salmonella typhimurium (strain LT2 / SGSC1412 / ATCC 700720)</name>
    <dbReference type="NCBI Taxonomy" id="99287"/>
    <lineage>
        <taxon>Bacteria</taxon>
        <taxon>Pseudomonadati</taxon>
        <taxon>Pseudomonadota</taxon>
        <taxon>Gammaproteobacteria</taxon>
        <taxon>Enterobacterales</taxon>
        <taxon>Enterobacteriaceae</taxon>
        <taxon>Salmonella</taxon>
    </lineage>
</organism>
<reference key="1">
    <citation type="journal article" date="2001" name="Nature">
        <title>Complete genome sequence of Salmonella enterica serovar Typhimurium LT2.</title>
        <authorList>
            <person name="McClelland M."/>
            <person name="Sanderson K.E."/>
            <person name="Spieth J."/>
            <person name="Clifton S.W."/>
            <person name="Latreille P."/>
            <person name="Courtney L."/>
            <person name="Porwollik S."/>
            <person name="Ali J."/>
            <person name="Dante M."/>
            <person name="Du F."/>
            <person name="Hou S."/>
            <person name="Layman D."/>
            <person name="Leonard S."/>
            <person name="Nguyen C."/>
            <person name="Scott K."/>
            <person name="Holmes A."/>
            <person name="Grewal N."/>
            <person name="Mulvaney E."/>
            <person name="Ryan E."/>
            <person name="Sun H."/>
            <person name="Florea L."/>
            <person name="Miller W."/>
            <person name="Stoneking T."/>
            <person name="Nhan M."/>
            <person name="Waterston R."/>
            <person name="Wilson R.K."/>
        </authorList>
    </citation>
    <scope>NUCLEOTIDE SEQUENCE [LARGE SCALE GENOMIC DNA]</scope>
    <source>
        <strain>LT2 / SGSC1412 / ATCC 700720</strain>
    </source>
</reference>
<reference key="2">
    <citation type="journal article" date="2006" name="J. Bacteriol.">
        <title>Crl activates transcription initiation of RpoS-regulated genes involved in the multicellular behavior of Salmonella enterica serovar Typhimurium.</title>
        <authorList>
            <person name="Robbe-Saule V."/>
            <person name="Jaumouille V."/>
            <person name="Prevost M.-C."/>
            <person name="Guadagnini S."/>
            <person name="Talhouarne C."/>
            <person name="Mathout H."/>
            <person name="Kolb A."/>
            <person name="Norel F."/>
        </authorList>
    </citation>
    <scope>FUNCTION</scope>
    <scope>INDUCTION</scope>
    <source>
        <strain>ATCC 14028 / SGSG 2980 / CDC 6516-60 / NCTC 12023</strain>
    </source>
</reference>
<feature type="chain" id="PRO_0000268904" description="Sigma factor-binding protein Crl">
    <location>
        <begin position="1"/>
        <end position="133"/>
    </location>
</feature>
<feature type="region of interest" description="Essential for activity" evidence="1">
    <location>
        <begin position="99"/>
        <end position="122"/>
    </location>
</feature>
<feature type="coiled-coil region" evidence="2">
    <location>
        <begin position="90"/>
        <end position="111"/>
    </location>
</feature>
<feature type="helix" evidence="5">
    <location>
        <begin position="11"/>
        <end position="19"/>
    </location>
</feature>
<feature type="strand" evidence="5">
    <location>
        <begin position="34"/>
        <end position="42"/>
    </location>
</feature>
<feature type="strand" evidence="5">
    <location>
        <begin position="44"/>
        <end position="46"/>
    </location>
</feature>
<feature type="strand" evidence="5">
    <location>
        <begin position="48"/>
        <end position="50"/>
    </location>
</feature>
<feature type="strand" evidence="5">
    <location>
        <begin position="53"/>
        <end position="62"/>
    </location>
</feature>
<feature type="strand" evidence="5">
    <location>
        <begin position="64"/>
        <end position="70"/>
    </location>
</feature>
<feature type="helix" evidence="5">
    <location>
        <begin position="90"/>
        <end position="113"/>
    </location>
</feature>
<feature type="strand" evidence="5">
    <location>
        <begin position="117"/>
        <end position="120"/>
    </location>
</feature>
<feature type="helix" evidence="5">
    <location>
        <begin position="124"/>
        <end position="126"/>
    </location>
</feature>
<evidence type="ECO:0000250" key="1"/>
<evidence type="ECO:0000255" key="2"/>
<evidence type="ECO:0000269" key="3">
    <source>
    </source>
</evidence>
<evidence type="ECO:0000305" key="4"/>
<evidence type="ECO:0007829" key="5">
    <source>
        <dbReference type="PDB" id="6OMF"/>
    </source>
</evidence>
<name>CRL_SALTY</name>
<proteinExistence type="evidence at protein level"/>
<protein>
    <recommendedName>
        <fullName>Sigma factor-binding protein Crl</fullName>
    </recommendedName>
</protein>
<accession>Q7CR52</accession>
<keyword id="KW-0002">3D-structure</keyword>
<keyword id="KW-0010">Activator</keyword>
<keyword id="KW-0175">Coiled coil</keyword>
<keyword id="KW-0963">Cytoplasm</keyword>
<keyword id="KW-1185">Reference proteome</keyword>
<keyword id="KW-0804">Transcription</keyword>
<keyword id="KW-0805">Transcription regulation</keyword>
<dbReference type="EMBL" id="AE006468">
    <property type="protein sequence ID" value="AAL19275.1"/>
    <property type="molecule type" value="Genomic_DNA"/>
</dbReference>
<dbReference type="RefSeq" id="NP_459316.1">
    <property type="nucleotide sequence ID" value="NC_003197.2"/>
</dbReference>
<dbReference type="RefSeq" id="WP_000174696.1">
    <property type="nucleotide sequence ID" value="NC_003197.2"/>
</dbReference>
<dbReference type="PDB" id="2MZ8">
    <property type="method" value="NMR"/>
    <property type="chains" value="A=1-133"/>
</dbReference>
<dbReference type="PDB" id="6OMF">
    <property type="method" value="EM"/>
    <property type="resolution" value="3.26 A"/>
    <property type="chains" value="J=1-133"/>
</dbReference>
<dbReference type="PDBsum" id="2MZ8"/>
<dbReference type="PDBsum" id="6OMF"/>
<dbReference type="BMRB" id="Q7CR52"/>
<dbReference type="EMDB" id="EMD-20090"/>
<dbReference type="SMR" id="Q7CR52"/>
<dbReference type="STRING" id="99287.STM0319"/>
<dbReference type="PaxDb" id="99287-STM0319"/>
<dbReference type="GeneID" id="1251838"/>
<dbReference type="KEGG" id="stm:STM0319"/>
<dbReference type="PATRIC" id="fig|99287.12.peg.339"/>
<dbReference type="HOGENOM" id="CLU_136773_0_0_6"/>
<dbReference type="OMA" id="FWGWWLE"/>
<dbReference type="PhylomeDB" id="Q7CR52"/>
<dbReference type="BioCyc" id="SENT99287:STM0319-MONOMER"/>
<dbReference type="Proteomes" id="UP000001014">
    <property type="component" value="Chromosome"/>
</dbReference>
<dbReference type="GO" id="GO:0005737">
    <property type="term" value="C:cytoplasm"/>
    <property type="evidence" value="ECO:0007669"/>
    <property type="project" value="UniProtKB-SubCell"/>
</dbReference>
<dbReference type="GO" id="GO:2001008">
    <property type="term" value="P:positive regulation of cellulose biosynthetic process"/>
    <property type="evidence" value="ECO:0000315"/>
    <property type="project" value="CACAO"/>
</dbReference>
<dbReference type="GO" id="GO:0045893">
    <property type="term" value="P:positive regulation of DNA-templated transcription"/>
    <property type="evidence" value="ECO:0000315"/>
    <property type="project" value="CACAO"/>
</dbReference>
<dbReference type="Gene3D" id="3.30.310.230">
    <property type="entry name" value="Sigma factor-binding protein Crl monomer"/>
    <property type="match status" value="1"/>
</dbReference>
<dbReference type="HAMAP" id="MF_01178">
    <property type="entry name" value="Crl"/>
    <property type="match status" value="1"/>
</dbReference>
<dbReference type="InterPro" id="IPR009986">
    <property type="entry name" value="Tscrpt_reg_Crl"/>
</dbReference>
<dbReference type="InterPro" id="IPR038208">
    <property type="entry name" value="Tscrpt_reg_Crl_sf"/>
</dbReference>
<dbReference type="NCBIfam" id="NF008217">
    <property type="entry name" value="PRK10984.1"/>
    <property type="match status" value="1"/>
</dbReference>
<dbReference type="Pfam" id="PF07417">
    <property type="entry name" value="Crl"/>
    <property type="match status" value="1"/>
</dbReference>
<comment type="function">
    <text evidence="3">Binds to the sigma-S subunit of RNA polymerase, activating expression of sigma-S-regulated genes, such as the csgBAC operon encoding the subunits of curli proteins, and BcsA, involved in cellulose biosynthesis.</text>
</comment>
<comment type="subcellular location">
    <subcellularLocation>
        <location evidence="1">Cytoplasm</location>
    </subcellularLocation>
</comment>
<comment type="induction">
    <text evidence="3">Induced at late exponential and stationary phases, and at low temperatures.</text>
</comment>
<comment type="similarity">
    <text evidence="4">Belongs to the Crl family.</text>
</comment>
<sequence length="133" mass="15797">MTLPSGHPKSRLIKKFTALGPYIREGQCEDNRFFFDCLAVCVNVKPAPEKREFWGWWMELEAQEKRFTYRYQFGLFDKEGNWTVVPINETEVVERLEYTLREFHEKLRDLLISMELALEPSDDFNDEPVKLSA</sequence>